<comment type="function">
    <text evidence="1">Specifically dimethylates two adjacent adenosines (A1518 and A1519) in the loop of a conserved hairpin near the 3'-end of 16S rRNA in the 30S particle. May play a critical role in biogenesis of 30S subunits.</text>
</comment>
<comment type="catalytic activity">
    <reaction evidence="1">
        <text>adenosine(1518)/adenosine(1519) in 16S rRNA + 4 S-adenosyl-L-methionine = N(6)-dimethyladenosine(1518)/N(6)-dimethyladenosine(1519) in 16S rRNA + 4 S-adenosyl-L-homocysteine + 4 H(+)</text>
        <dbReference type="Rhea" id="RHEA:19609"/>
        <dbReference type="Rhea" id="RHEA-COMP:10232"/>
        <dbReference type="Rhea" id="RHEA-COMP:10233"/>
        <dbReference type="ChEBI" id="CHEBI:15378"/>
        <dbReference type="ChEBI" id="CHEBI:57856"/>
        <dbReference type="ChEBI" id="CHEBI:59789"/>
        <dbReference type="ChEBI" id="CHEBI:74411"/>
        <dbReference type="ChEBI" id="CHEBI:74493"/>
        <dbReference type="EC" id="2.1.1.182"/>
    </reaction>
</comment>
<comment type="subcellular location">
    <subcellularLocation>
        <location evidence="1">Cytoplasm</location>
    </subcellularLocation>
</comment>
<comment type="similarity">
    <text evidence="1">Belongs to the class I-like SAM-binding methyltransferase superfamily. rRNA adenine N(6)-methyltransferase family. RsmA subfamily.</text>
</comment>
<name>RSMA_NITV4</name>
<proteinExistence type="inferred from homology"/>
<feature type="chain" id="PRO_1000056613" description="Ribosomal RNA small subunit methyltransferase A">
    <location>
        <begin position="1"/>
        <end position="266"/>
    </location>
</feature>
<feature type="binding site" evidence="1">
    <location>
        <position position="12"/>
    </location>
    <ligand>
        <name>S-adenosyl-L-methionine</name>
        <dbReference type="ChEBI" id="CHEBI:59789"/>
    </ligand>
</feature>
<feature type="binding site" evidence="1">
    <location>
        <position position="14"/>
    </location>
    <ligand>
        <name>S-adenosyl-L-methionine</name>
        <dbReference type="ChEBI" id="CHEBI:59789"/>
    </ligand>
</feature>
<feature type="binding site" evidence="1">
    <location>
        <position position="39"/>
    </location>
    <ligand>
        <name>S-adenosyl-L-methionine</name>
        <dbReference type="ChEBI" id="CHEBI:59789"/>
    </ligand>
</feature>
<feature type="binding site" evidence="1">
    <location>
        <position position="61"/>
    </location>
    <ligand>
        <name>S-adenosyl-L-methionine</name>
        <dbReference type="ChEBI" id="CHEBI:59789"/>
    </ligand>
</feature>
<feature type="binding site" evidence="1">
    <location>
        <position position="87"/>
    </location>
    <ligand>
        <name>S-adenosyl-L-methionine</name>
        <dbReference type="ChEBI" id="CHEBI:59789"/>
    </ligand>
</feature>
<feature type="binding site" evidence="1">
    <location>
        <position position="107"/>
    </location>
    <ligand>
        <name>S-adenosyl-L-methionine</name>
        <dbReference type="ChEBI" id="CHEBI:59789"/>
    </ligand>
</feature>
<protein>
    <recommendedName>
        <fullName evidence="1">Ribosomal RNA small subunit methyltransferase A</fullName>
        <ecNumber evidence="1">2.1.1.182</ecNumber>
    </recommendedName>
    <alternativeName>
        <fullName evidence="1">16S rRNA (adenine(1518)-N(6)/adenine(1519)-N(6))-dimethyltransferase</fullName>
    </alternativeName>
    <alternativeName>
        <fullName evidence="1">16S rRNA dimethyladenosine transferase</fullName>
    </alternativeName>
    <alternativeName>
        <fullName evidence="1">16S rRNA dimethylase</fullName>
    </alternativeName>
    <alternativeName>
        <fullName evidence="1">S-adenosylmethionine-6-N', N'-adenosyl(rRNA) dimethyltransferase</fullName>
    </alternativeName>
</protein>
<evidence type="ECO:0000255" key="1">
    <source>
        <dbReference type="HAMAP-Rule" id="MF_00607"/>
    </source>
</evidence>
<organism>
    <name type="scientific">Nitratidesulfovibrio vulgaris (strain DP4)</name>
    <name type="common">Desulfovibrio vulgaris</name>
    <dbReference type="NCBI Taxonomy" id="391774"/>
    <lineage>
        <taxon>Bacteria</taxon>
        <taxon>Pseudomonadati</taxon>
        <taxon>Thermodesulfobacteriota</taxon>
        <taxon>Desulfovibrionia</taxon>
        <taxon>Desulfovibrionales</taxon>
        <taxon>Desulfovibrionaceae</taxon>
        <taxon>Nitratidesulfovibrio</taxon>
    </lineage>
</organism>
<reference key="1">
    <citation type="journal article" date="2009" name="Environ. Microbiol.">
        <title>Contribution of mobile genetic elements to Desulfovibrio vulgaris genome plasticity.</title>
        <authorList>
            <person name="Walker C.B."/>
            <person name="Stolyar S."/>
            <person name="Chivian D."/>
            <person name="Pinel N."/>
            <person name="Gabster J.A."/>
            <person name="Dehal P.S."/>
            <person name="He Z."/>
            <person name="Yang Z.K."/>
            <person name="Yen H.C."/>
            <person name="Zhou J."/>
            <person name="Wall J.D."/>
            <person name="Hazen T.C."/>
            <person name="Arkin A.P."/>
            <person name="Stahl D.A."/>
        </authorList>
    </citation>
    <scope>NUCLEOTIDE SEQUENCE [LARGE SCALE GENOMIC DNA]</scope>
    <source>
        <strain>DP4</strain>
    </source>
</reference>
<dbReference type="EC" id="2.1.1.182" evidence="1"/>
<dbReference type="EMBL" id="CP000527">
    <property type="protein sequence ID" value="ABM28381.1"/>
    <property type="molecule type" value="Genomic_DNA"/>
</dbReference>
<dbReference type="RefSeq" id="WP_011792217.1">
    <property type="nucleotide sequence ID" value="NC_008751.1"/>
</dbReference>
<dbReference type="SMR" id="A1VD65"/>
<dbReference type="KEGG" id="dvl:Dvul_1363"/>
<dbReference type="HOGENOM" id="CLU_041220_0_1_7"/>
<dbReference type="Proteomes" id="UP000009173">
    <property type="component" value="Chromosome"/>
</dbReference>
<dbReference type="GO" id="GO:0005829">
    <property type="term" value="C:cytosol"/>
    <property type="evidence" value="ECO:0007669"/>
    <property type="project" value="TreeGrafter"/>
</dbReference>
<dbReference type="GO" id="GO:0052908">
    <property type="term" value="F:16S rRNA (adenine(1518)-N(6)/adenine(1519)-N(6))-dimethyltransferase activity"/>
    <property type="evidence" value="ECO:0007669"/>
    <property type="project" value="UniProtKB-EC"/>
</dbReference>
<dbReference type="GO" id="GO:0003723">
    <property type="term" value="F:RNA binding"/>
    <property type="evidence" value="ECO:0007669"/>
    <property type="project" value="UniProtKB-KW"/>
</dbReference>
<dbReference type="Gene3D" id="1.10.8.100">
    <property type="entry name" value="Ribosomal RNA adenine dimethylase-like, domain 2"/>
    <property type="match status" value="1"/>
</dbReference>
<dbReference type="Gene3D" id="3.40.50.150">
    <property type="entry name" value="Vaccinia Virus protein VP39"/>
    <property type="match status" value="1"/>
</dbReference>
<dbReference type="HAMAP" id="MF_00607">
    <property type="entry name" value="16SrRNA_methyltr_A"/>
    <property type="match status" value="1"/>
</dbReference>
<dbReference type="InterPro" id="IPR001737">
    <property type="entry name" value="KsgA/Erm"/>
</dbReference>
<dbReference type="InterPro" id="IPR023165">
    <property type="entry name" value="rRNA_Ade_diMease-like_C"/>
</dbReference>
<dbReference type="InterPro" id="IPR020596">
    <property type="entry name" value="rRNA_Ade_Mease_Trfase_CS"/>
</dbReference>
<dbReference type="InterPro" id="IPR020598">
    <property type="entry name" value="rRNA_Ade_methylase_Trfase_N"/>
</dbReference>
<dbReference type="InterPro" id="IPR011530">
    <property type="entry name" value="rRNA_adenine_dimethylase"/>
</dbReference>
<dbReference type="InterPro" id="IPR029063">
    <property type="entry name" value="SAM-dependent_MTases_sf"/>
</dbReference>
<dbReference type="NCBIfam" id="TIGR00755">
    <property type="entry name" value="ksgA"/>
    <property type="match status" value="1"/>
</dbReference>
<dbReference type="PANTHER" id="PTHR11727">
    <property type="entry name" value="DIMETHYLADENOSINE TRANSFERASE"/>
    <property type="match status" value="1"/>
</dbReference>
<dbReference type="PANTHER" id="PTHR11727:SF7">
    <property type="entry name" value="DIMETHYLADENOSINE TRANSFERASE-RELATED"/>
    <property type="match status" value="1"/>
</dbReference>
<dbReference type="Pfam" id="PF00398">
    <property type="entry name" value="RrnaAD"/>
    <property type="match status" value="1"/>
</dbReference>
<dbReference type="SMART" id="SM00650">
    <property type="entry name" value="rADc"/>
    <property type="match status" value="1"/>
</dbReference>
<dbReference type="SUPFAM" id="SSF53335">
    <property type="entry name" value="S-adenosyl-L-methionine-dependent methyltransferases"/>
    <property type="match status" value="1"/>
</dbReference>
<dbReference type="PROSITE" id="PS01131">
    <property type="entry name" value="RRNA_A_DIMETH"/>
    <property type="match status" value="1"/>
</dbReference>
<dbReference type="PROSITE" id="PS51689">
    <property type="entry name" value="SAM_RNA_A_N6_MT"/>
    <property type="match status" value="1"/>
</dbReference>
<keyword id="KW-0963">Cytoplasm</keyword>
<keyword id="KW-0489">Methyltransferase</keyword>
<keyword id="KW-0694">RNA-binding</keyword>
<keyword id="KW-0698">rRNA processing</keyword>
<keyword id="KW-0949">S-adenosyl-L-methionine</keyword>
<keyword id="KW-0808">Transferase</keyword>
<accession>A1VD65</accession>
<gene>
    <name evidence="1" type="primary">rsmA</name>
    <name evidence="1" type="synonym">ksgA</name>
    <name type="ordered locus">Dvul_1363</name>
</gene>
<sequence>MPPRAKKSLGQNFLKDRNIAARIAAQLHIGPDDWVIEIGPGPGALTRHIHAAGPARLFLLEKDHHWAREHHLHPLAGTPEAQVVLTDALLFPWERLDAAHPWKVIGNLPYNVASPLMWDICSRAPGLVRASFMIQKEVGERIVAAPGSRQYGALSVWLQCFTKPEWCFVVPPHVFTPRPKVDSAVLAFTPRTDRPDAVQSKRLAHVLRLCFQQRRKQLQGILRPHVGGDASALLAELGIDPAARPETLSPERFIALGEAVAMSAIA</sequence>